<organism>
    <name type="scientific">Nitrosomonas eutropha (strain DSM 101675 / C91 / Nm57)</name>
    <dbReference type="NCBI Taxonomy" id="335283"/>
    <lineage>
        <taxon>Bacteria</taxon>
        <taxon>Pseudomonadati</taxon>
        <taxon>Pseudomonadota</taxon>
        <taxon>Betaproteobacteria</taxon>
        <taxon>Nitrosomonadales</taxon>
        <taxon>Nitrosomonadaceae</taxon>
        <taxon>Nitrosomonas</taxon>
    </lineage>
</organism>
<accession>Q0AE56</accession>
<comment type="function">
    <text evidence="1">Required for the insertion and/or proper folding and/or complex formation of integral membrane proteins into the membrane. Involved in integration of membrane proteins that insert both dependently and independently of the Sec translocase complex, as well as at least some lipoproteins. Aids folding of multispanning membrane proteins.</text>
</comment>
<comment type="subunit">
    <text evidence="1">Interacts with the Sec translocase complex via SecD. Specifically interacts with transmembrane segments of nascent integral membrane proteins during membrane integration.</text>
</comment>
<comment type="subcellular location">
    <subcellularLocation>
        <location evidence="1">Cell inner membrane</location>
        <topology evidence="1">Multi-pass membrane protein</topology>
    </subcellularLocation>
</comment>
<comment type="similarity">
    <text evidence="1">Belongs to the OXA1/ALB3/YidC family. Type 1 subfamily.</text>
</comment>
<gene>
    <name evidence="1" type="primary">yidC</name>
    <name type="ordered locus">Neut_2154</name>
</gene>
<name>YIDC_NITEC</name>
<evidence type="ECO:0000255" key="1">
    <source>
        <dbReference type="HAMAP-Rule" id="MF_01810"/>
    </source>
</evidence>
<evidence type="ECO:0000256" key="2">
    <source>
        <dbReference type="SAM" id="MobiDB-lite"/>
    </source>
</evidence>
<keyword id="KW-0997">Cell inner membrane</keyword>
<keyword id="KW-1003">Cell membrane</keyword>
<keyword id="KW-0143">Chaperone</keyword>
<keyword id="KW-0472">Membrane</keyword>
<keyword id="KW-0653">Protein transport</keyword>
<keyword id="KW-0812">Transmembrane</keyword>
<keyword id="KW-1133">Transmembrane helix</keyword>
<keyword id="KW-0813">Transport</keyword>
<sequence length="622" mass="69255">MDNKKIVLLIIFSTSLLFLWDAWVKEQEKFNAPPSVVAQANSAAGVTQSKNNDGLPIPGSELTASQTGSDLNGIPSSGDTADSVTPRLLPSGEQIRVVTDKVIAEIDTMGGDLRRLELLQQPSPEDENVPYSLLHSEASRTYVAQSGLVGEGLPNHKTVYQVESGIRNYELTAGEDKVVIRLLAPETQGVQVIKTYTFHRDSYVIDIGFEIANKSDATIRPFAYFQMLRDDTPPPAHTMMIRSFLGAAVYTDEEKYQKIPFDDLDKGKTDYPANANNGWIAMLEHYFLTAWLPPQQTPREYFAKRQSDNLYTAGVIVPAGVITAGETVTTTMPLYAGPEEQDRLAELAPGLELTVDYGWLTMIAKPLFRLLSFYHSWTGNWGIAIILLTITVKLLFFPLSAAGYRSMAKLRLVTPKLKRIQDQYKGDRQRMHQAMMDFYKTEKINPMGGCFPILVQIPVFIALYWTILAAVELRYAPFALWITDLSSPDPKYLLPVLLGISMFIQTRLNPTPTDPIQAKIMQIMPVAFSAIFFFFPAGLVLYSLVNNILSIAQQWKITKMYGTAPSQDAPESPASKDAPELPVSNQVINDSENTEAPASGPADSPKKPVNIPRRMHKRTRKK</sequence>
<proteinExistence type="inferred from homology"/>
<protein>
    <recommendedName>
        <fullName evidence="1">Membrane protein insertase YidC</fullName>
    </recommendedName>
    <alternativeName>
        <fullName evidence="1">Foldase YidC</fullName>
    </alternativeName>
    <alternativeName>
        <fullName evidence="1">Membrane integrase YidC</fullName>
    </alternativeName>
    <alternativeName>
        <fullName evidence="1">Membrane protein YidC</fullName>
    </alternativeName>
</protein>
<feature type="chain" id="PRO_1000070126" description="Membrane protein insertase YidC">
    <location>
        <begin position="1"/>
        <end position="622"/>
    </location>
</feature>
<feature type="transmembrane region" description="Helical" evidence="1">
    <location>
        <begin position="6"/>
        <end position="26"/>
    </location>
</feature>
<feature type="transmembrane region" description="Helical" evidence="1">
    <location>
        <begin position="381"/>
        <end position="401"/>
    </location>
</feature>
<feature type="transmembrane region" description="Helical" evidence="1">
    <location>
        <begin position="451"/>
        <end position="471"/>
    </location>
</feature>
<feature type="transmembrane region" description="Helical" evidence="1">
    <location>
        <begin position="525"/>
        <end position="545"/>
    </location>
</feature>
<feature type="region of interest" description="Disordered" evidence="2">
    <location>
        <begin position="47"/>
        <end position="87"/>
    </location>
</feature>
<feature type="region of interest" description="Disordered" evidence="2">
    <location>
        <begin position="563"/>
        <end position="622"/>
    </location>
</feature>
<feature type="compositionally biased region" description="Polar residues" evidence="2">
    <location>
        <begin position="62"/>
        <end position="83"/>
    </location>
</feature>
<feature type="compositionally biased region" description="Polar residues" evidence="2">
    <location>
        <begin position="583"/>
        <end position="596"/>
    </location>
</feature>
<feature type="compositionally biased region" description="Basic residues" evidence="2">
    <location>
        <begin position="613"/>
        <end position="622"/>
    </location>
</feature>
<reference key="1">
    <citation type="journal article" date="2007" name="Environ. Microbiol.">
        <title>Whole-genome analysis of the ammonia-oxidizing bacterium, Nitrosomonas eutropha C91: implications for niche adaptation.</title>
        <authorList>
            <person name="Stein L.Y."/>
            <person name="Arp D.J."/>
            <person name="Berube P.M."/>
            <person name="Chain P.S."/>
            <person name="Hauser L."/>
            <person name="Jetten M.S."/>
            <person name="Klotz M.G."/>
            <person name="Larimer F.W."/>
            <person name="Norton J.M."/>
            <person name="Op den Camp H.J.M."/>
            <person name="Shin M."/>
            <person name="Wei X."/>
        </authorList>
    </citation>
    <scope>NUCLEOTIDE SEQUENCE [LARGE SCALE GENOMIC DNA]</scope>
    <source>
        <strain>DSM 101675 / C91 / Nm57</strain>
    </source>
</reference>
<dbReference type="EMBL" id="CP000450">
    <property type="protein sequence ID" value="ABI60376.1"/>
    <property type="molecule type" value="Genomic_DNA"/>
</dbReference>
<dbReference type="RefSeq" id="WP_011635173.1">
    <property type="nucleotide sequence ID" value="NC_008344.1"/>
</dbReference>
<dbReference type="SMR" id="Q0AE56"/>
<dbReference type="STRING" id="335283.Neut_2154"/>
<dbReference type="KEGG" id="net:Neut_2154"/>
<dbReference type="eggNOG" id="COG0706">
    <property type="taxonomic scope" value="Bacteria"/>
</dbReference>
<dbReference type="HOGENOM" id="CLU_016535_3_0_4"/>
<dbReference type="OrthoDB" id="9780552at2"/>
<dbReference type="Proteomes" id="UP000001966">
    <property type="component" value="Chromosome"/>
</dbReference>
<dbReference type="GO" id="GO:0005886">
    <property type="term" value="C:plasma membrane"/>
    <property type="evidence" value="ECO:0007669"/>
    <property type="project" value="UniProtKB-SubCell"/>
</dbReference>
<dbReference type="GO" id="GO:0032977">
    <property type="term" value="F:membrane insertase activity"/>
    <property type="evidence" value="ECO:0007669"/>
    <property type="project" value="InterPro"/>
</dbReference>
<dbReference type="GO" id="GO:0051205">
    <property type="term" value="P:protein insertion into membrane"/>
    <property type="evidence" value="ECO:0007669"/>
    <property type="project" value="TreeGrafter"/>
</dbReference>
<dbReference type="GO" id="GO:0015031">
    <property type="term" value="P:protein transport"/>
    <property type="evidence" value="ECO:0007669"/>
    <property type="project" value="UniProtKB-KW"/>
</dbReference>
<dbReference type="CDD" id="cd20070">
    <property type="entry name" value="5TM_YidC_Alb3"/>
    <property type="match status" value="1"/>
</dbReference>
<dbReference type="CDD" id="cd19961">
    <property type="entry name" value="EcYidC-like_peri"/>
    <property type="match status" value="1"/>
</dbReference>
<dbReference type="Gene3D" id="2.70.98.90">
    <property type="match status" value="1"/>
</dbReference>
<dbReference type="HAMAP" id="MF_01810">
    <property type="entry name" value="YidC_type1"/>
    <property type="match status" value="1"/>
</dbReference>
<dbReference type="InterPro" id="IPR019998">
    <property type="entry name" value="Membr_insert_YidC"/>
</dbReference>
<dbReference type="InterPro" id="IPR028053">
    <property type="entry name" value="Membr_insert_YidC_N"/>
</dbReference>
<dbReference type="InterPro" id="IPR001708">
    <property type="entry name" value="YidC/ALB3/OXA1/COX18"/>
</dbReference>
<dbReference type="InterPro" id="IPR028055">
    <property type="entry name" value="YidC/Oxa/ALB_C"/>
</dbReference>
<dbReference type="InterPro" id="IPR047196">
    <property type="entry name" value="YidC_ALB_C"/>
</dbReference>
<dbReference type="InterPro" id="IPR038221">
    <property type="entry name" value="YidC_periplasmic_sf"/>
</dbReference>
<dbReference type="NCBIfam" id="NF002352">
    <property type="entry name" value="PRK01318.1-3"/>
    <property type="match status" value="1"/>
</dbReference>
<dbReference type="NCBIfam" id="NF002353">
    <property type="entry name" value="PRK01318.1-4"/>
    <property type="match status" value="1"/>
</dbReference>
<dbReference type="NCBIfam" id="TIGR03593">
    <property type="entry name" value="yidC_nterm"/>
    <property type="match status" value="1"/>
</dbReference>
<dbReference type="NCBIfam" id="TIGR03592">
    <property type="entry name" value="yidC_oxa1_cterm"/>
    <property type="match status" value="1"/>
</dbReference>
<dbReference type="PANTHER" id="PTHR12428:SF65">
    <property type="entry name" value="CYTOCHROME C OXIDASE ASSEMBLY PROTEIN COX18, MITOCHONDRIAL"/>
    <property type="match status" value="1"/>
</dbReference>
<dbReference type="PANTHER" id="PTHR12428">
    <property type="entry name" value="OXA1"/>
    <property type="match status" value="1"/>
</dbReference>
<dbReference type="Pfam" id="PF02096">
    <property type="entry name" value="60KD_IMP"/>
    <property type="match status" value="1"/>
</dbReference>
<dbReference type="Pfam" id="PF14849">
    <property type="entry name" value="YidC_periplas"/>
    <property type="match status" value="1"/>
</dbReference>
<dbReference type="PRINTS" id="PR00701">
    <property type="entry name" value="60KDINNERMP"/>
</dbReference>
<dbReference type="PRINTS" id="PR01900">
    <property type="entry name" value="YIDCPROTEIN"/>
</dbReference>